<name>Y1933_MYCBO</name>
<feature type="chain" id="PRO_0000147624" description="UPF0045 protein Mb1933">
    <location>
        <begin position="1"/>
        <end position="102"/>
    </location>
</feature>
<dbReference type="EMBL" id="LT708304">
    <property type="protein sequence ID" value="SIU00536.1"/>
    <property type="molecule type" value="Genomic_DNA"/>
</dbReference>
<dbReference type="RefSeq" id="NP_855584.1">
    <property type="nucleotide sequence ID" value="NC_002945.3"/>
</dbReference>
<dbReference type="RefSeq" id="WP_003409536.1">
    <property type="nucleotide sequence ID" value="NC_002945.4"/>
</dbReference>
<dbReference type="SMR" id="P67120"/>
<dbReference type="KEGG" id="mbo:BQ2027_MB1933"/>
<dbReference type="PATRIC" id="fig|233413.5.peg.2120"/>
<dbReference type="Proteomes" id="UP000001419">
    <property type="component" value="Chromosome"/>
</dbReference>
<dbReference type="GO" id="GO:0005829">
    <property type="term" value="C:cytosol"/>
    <property type="evidence" value="ECO:0007669"/>
    <property type="project" value="TreeGrafter"/>
</dbReference>
<dbReference type="Gene3D" id="3.30.70.930">
    <property type="match status" value="1"/>
</dbReference>
<dbReference type="InterPro" id="IPR029756">
    <property type="entry name" value="MTH1187/YkoF-like"/>
</dbReference>
<dbReference type="InterPro" id="IPR002767">
    <property type="entry name" value="Thiamine_BP"/>
</dbReference>
<dbReference type="InterPro" id="IPR051614">
    <property type="entry name" value="UPF0045_domain"/>
</dbReference>
<dbReference type="NCBIfam" id="TIGR00106">
    <property type="entry name" value="MTH1187 family thiamine-binding protein"/>
    <property type="match status" value="1"/>
</dbReference>
<dbReference type="PANTHER" id="PTHR33777">
    <property type="entry name" value="UPF0045 PROTEIN ECM15"/>
    <property type="match status" value="1"/>
</dbReference>
<dbReference type="PANTHER" id="PTHR33777:SF1">
    <property type="entry name" value="UPF0045 PROTEIN ECM15"/>
    <property type="match status" value="1"/>
</dbReference>
<dbReference type="Pfam" id="PF01910">
    <property type="entry name" value="Thiamine_BP"/>
    <property type="match status" value="1"/>
</dbReference>
<dbReference type="SUPFAM" id="SSF89957">
    <property type="entry name" value="MTH1187/YkoF-like"/>
    <property type="match status" value="1"/>
</dbReference>
<organism>
    <name type="scientific">Mycobacterium bovis (strain ATCC BAA-935 / AF2122/97)</name>
    <dbReference type="NCBI Taxonomy" id="233413"/>
    <lineage>
        <taxon>Bacteria</taxon>
        <taxon>Bacillati</taxon>
        <taxon>Actinomycetota</taxon>
        <taxon>Actinomycetes</taxon>
        <taxon>Mycobacteriales</taxon>
        <taxon>Mycobacteriaceae</taxon>
        <taxon>Mycobacterium</taxon>
        <taxon>Mycobacterium tuberculosis complex</taxon>
    </lineage>
</organism>
<protein>
    <recommendedName>
        <fullName>UPF0045 protein Mb1933</fullName>
    </recommendedName>
</protein>
<comment type="similarity">
    <text evidence="1">Belongs to the UPF0045 family.</text>
</comment>
<proteinExistence type="inferred from homology"/>
<accession>P67120</accession>
<accession>A0A1R3XZP4</accession>
<accession>O07734</accession>
<accession>X2BJC9</accession>
<keyword id="KW-1185">Reference proteome</keyword>
<reference key="1">
    <citation type="journal article" date="2003" name="Proc. Natl. Acad. Sci. U.S.A.">
        <title>The complete genome sequence of Mycobacterium bovis.</title>
        <authorList>
            <person name="Garnier T."/>
            <person name="Eiglmeier K."/>
            <person name="Camus J.-C."/>
            <person name="Medina N."/>
            <person name="Mansoor H."/>
            <person name="Pryor M."/>
            <person name="Duthoy S."/>
            <person name="Grondin S."/>
            <person name="Lacroix C."/>
            <person name="Monsempe C."/>
            <person name="Simon S."/>
            <person name="Harris B."/>
            <person name="Atkin R."/>
            <person name="Doggett J."/>
            <person name="Mayes R."/>
            <person name="Keating L."/>
            <person name="Wheeler P.R."/>
            <person name="Parkhill J."/>
            <person name="Barrell B.G."/>
            <person name="Cole S.T."/>
            <person name="Gordon S.V."/>
            <person name="Hewinson R.G."/>
        </authorList>
    </citation>
    <scope>NUCLEOTIDE SEQUENCE [LARGE SCALE GENOMIC DNA]</scope>
    <source>
        <strain>ATCC BAA-935 / AF2122/97</strain>
    </source>
</reference>
<reference key="2">
    <citation type="journal article" date="2017" name="Genome Announc.">
        <title>Updated reference genome sequence and annotation of Mycobacterium bovis AF2122/97.</title>
        <authorList>
            <person name="Malone K.M."/>
            <person name="Farrell D."/>
            <person name="Stuber T.P."/>
            <person name="Schubert O.T."/>
            <person name="Aebersold R."/>
            <person name="Robbe-Austerman S."/>
            <person name="Gordon S.V."/>
        </authorList>
    </citation>
    <scope>NUCLEOTIDE SEQUENCE [LARGE SCALE GENOMIC DNA]</scope>
    <scope>GENOME REANNOTATION</scope>
    <source>
        <strain>ATCC BAA-935 / AF2122/97</strain>
    </source>
</reference>
<evidence type="ECO:0000305" key="1"/>
<gene>
    <name type="ordered locus">BQ2027_MB1933</name>
</gene>
<sequence length="102" mass="10953">MSVLVAFSVTPLGVGEGVGEIVTEAIRVVRDSGLPNQTDAMFTVIEGDTWAEVMAVVQRAVEAVAARAPRVSAVIKVDWRPGVTDAMTQKVATVERYLLRPE</sequence>